<protein>
    <recommendedName>
        <fullName evidence="1">1-deoxy-D-xylulose 5-phosphate reductoisomerase</fullName>
        <shortName evidence="1">DXP reductoisomerase</shortName>
        <ecNumber evidence="1">1.1.1.267</ecNumber>
    </recommendedName>
    <alternativeName>
        <fullName evidence="1">1-deoxyxylulose-5-phosphate reductoisomerase</fullName>
    </alternativeName>
    <alternativeName>
        <fullName evidence="1">2-C-methyl-D-erythritol 4-phosphate synthase</fullName>
    </alternativeName>
</protein>
<dbReference type="EC" id="1.1.1.267" evidence="1"/>
<dbReference type="EMBL" id="AL157959">
    <property type="protein sequence ID" value="CAM07402.1"/>
    <property type="molecule type" value="Genomic_DNA"/>
</dbReference>
<dbReference type="PIR" id="B82000">
    <property type="entry name" value="B82000"/>
</dbReference>
<dbReference type="SMR" id="Q9JX33"/>
<dbReference type="EnsemblBacteria" id="CAM07402">
    <property type="protein sequence ID" value="CAM07402"/>
    <property type="gene ID" value="NMA0083"/>
</dbReference>
<dbReference type="KEGG" id="nma:NMA0083"/>
<dbReference type="HOGENOM" id="CLU_035714_4_0_4"/>
<dbReference type="UniPathway" id="UPA00056">
    <property type="reaction ID" value="UER00092"/>
</dbReference>
<dbReference type="Proteomes" id="UP000000626">
    <property type="component" value="Chromosome"/>
</dbReference>
<dbReference type="GO" id="GO:0030604">
    <property type="term" value="F:1-deoxy-D-xylulose-5-phosphate reductoisomerase activity"/>
    <property type="evidence" value="ECO:0007669"/>
    <property type="project" value="UniProtKB-UniRule"/>
</dbReference>
<dbReference type="GO" id="GO:0030145">
    <property type="term" value="F:manganese ion binding"/>
    <property type="evidence" value="ECO:0007669"/>
    <property type="project" value="TreeGrafter"/>
</dbReference>
<dbReference type="GO" id="GO:0070402">
    <property type="term" value="F:NADPH binding"/>
    <property type="evidence" value="ECO:0007669"/>
    <property type="project" value="InterPro"/>
</dbReference>
<dbReference type="GO" id="GO:0051484">
    <property type="term" value="P:isopentenyl diphosphate biosynthetic process, methylerythritol 4-phosphate pathway involved in terpenoid biosynthetic process"/>
    <property type="evidence" value="ECO:0007669"/>
    <property type="project" value="TreeGrafter"/>
</dbReference>
<dbReference type="FunFam" id="1.10.1740.10:FF:000004">
    <property type="entry name" value="1-deoxy-D-xylulose 5-phosphate reductoisomerase"/>
    <property type="match status" value="1"/>
</dbReference>
<dbReference type="FunFam" id="3.40.50.720:FF:000045">
    <property type="entry name" value="1-deoxy-D-xylulose 5-phosphate reductoisomerase"/>
    <property type="match status" value="1"/>
</dbReference>
<dbReference type="Gene3D" id="1.10.1740.10">
    <property type="match status" value="1"/>
</dbReference>
<dbReference type="Gene3D" id="3.40.50.720">
    <property type="entry name" value="NAD(P)-binding Rossmann-like Domain"/>
    <property type="match status" value="1"/>
</dbReference>
<dbReference type="HAMAP" id="MF_00183">
    <property type="entry name" value="DXP_reductoisom"/>
    <property type="match status" value="1"/>
</dbReference>
<dbReference type="InterPro" id="IPR003821">
    <property type="entry name" value="DXP_reductoisomerase"/>
</dbReference>
<dbReference type="InterPro" id="IPR013644">
    <property type="entry name" value="DXP_reductoisomerase_C"/>
</dbReference>
<dbReference type="InterPro" id="IPR013512">
    <property type="entry name" value="DXP_reductoisomerase_N"/>
</dbReference>
<dbReference type="InterPro" id="IPR026877">
    <property type="entry name" value="DXPR_C"/>
</dbReference>
<dbReference type="InterPro" id="IPR036169">
    <property type="entry name" value="DXPR_C_sf"/>
</dbReference>
<dbReference type="InterPro" id="IPR036291">
    <property type="entry name" value="NAD(P)-bd_dom_sf"/>
</dbReference>
<dbReference type="NCBIfam" id="TIGR00243">
    <property type="entry name" value="Dxr"/>
    <property type="match status" value="1"/>
</dbReference>
<dbReference type="NCBIfam" id="NF003938">
    <property type="entry name" value="PRK05447.1-1"/>
    <property type="match status" value="1"/>
</dbReference>
<dbReference type="NCBIfam" id="NF009114">
    <property type="entry name" value="PRK12464.1"/>
    <property type="match status" value="1"/>
</dbReference>
<dbReference type="PANTHER" id="PTHR30525">
    <property type="entry name" value="1-DEOXY-D-XYLULOSE 5-PHOSPHATE REDUCTOISOMERASE"/>
    <property type="match status" value="1"/>
</dbReference>
<dbReference type="PANTHER" id="PTHR30525:SF0">
    <property type="entry name" value="1-DEOXY-D-XYLULOSE 5-PHOSPHATE REDUCTOISOMERASE, CHLOROPLASTIC"/>
    <property type="match status" value="1"/>
</dbReference>
<dbReference type="Pfam" id="PF08436">
    <property type="entry name" value="DXP_redisom_C"/>
    <property type="match status" value="1"/>
</dbReference>
<dbReference type="Pfam" id="PF02670">
    <property type="entry name" value="DXP_reductoisom"/>
    <property type="match status" value="1"/>
</dbReference>
<dbReference type="Pfam" id="PF13288">
    <property type="entry name" value="DXPR_C"/>
    <property type="match status" value="1"/>
</dbReference>
<dbReference type="PIRSF" id="PIRSF006205">
    <property type="entry name" value="Dxp_reductismrs"/>
    <property type="match status" value="1"/>
</dbReference>
<dbReference type="SUPFAM" id="SSF69055">
    <property type="entry name" value="1-deoxy-D-xylulose-5-phosphate reductoisomerase, C-terminal domain"/>
    <property type="match status" value="1"/>
</dbReference>
<dbReference type="SUPFAM" id="SSF55347">
    <property type="entry name" value="Glyceraldehyde-3-phosphate dehydrogenase-like, C-terminal domain"/>
    <property type="match status" value="1"/>
</dbReference>
<dbReference type="SUPFAM" id="SSF51735">
    <property type="entry name" value="NAD(P)-binding Rossmann-fold domains"/>
    <property type="match status" value="1"/>
</dbReference>
<name>DXR_NEIMA</name>
<keyword id="KW-0414">Isoprene biosynthesis</keyword>
<keyword id="KW-0464">Manganese</keyword>
<keyword id="KW-0479">Metal-binding</keyword>
<keyword id="KW-0521">NADP</keyword>
<keyword id="KW-0560">Oxidoreductase</keyword>
<evidence type="ECO:0000255" key="1">
    <source>
        <dbReference type="HAMAP-Rule" id="MF_00183"/>
    </source>
</evidence>
<sequence length="394" mass="41913">MTPQVLTILGSTGSIGESTLDVVSRHPEKFRVFALAGHKQVEKLAAQCQTFHPEYAVVADAEHAARLEALLKRDGTATQVLHGAQALVDVASADEVSGVMCAIVGAVGLPSALAAAQKGKTIYLANKETLVVSGALFMETARANGAAVLPVDSEHNAVFQVLPRDYTGRLNEHGIASIILTASGGPFLTADLNTFDSITPDQAVKHPNWRMGRKISVDSATMMNKGLELIEAHWLFNCPPDKLEVVIHPQSVIHSMVRYRDGSVLAQLGNPDMRTPIAYCLGLPERIDSGVGDLDFDALSALTFQKPDFDRFPCLKLAYEAMNAGGAAPCVLNAANEAAVAAFLDGQIKFTDIAKTVAHCLSQDFSDGIGDIGGLLAQDARTRAQARAFIGTLR</sequence>
<accession>Q9JX33</accession>
<accession>A1INU5</accession>
<comment type="function">
    <text evidence="1">Catalyzes the NADPH-dependent rearrangement and reduction of 1-deoxy-D-xylulose-5-phosphate (DXP) to 2-C-methyl-D-erythritol 4-phosphate (MEP).</text>
</comment>
<comment type="catalytic activity">
    <reaction evidence="1">
        <text>2-C-methyl-D-erythritol 4-phosphate + NADP(+) = 1-deoxy-D-xylulose 5-phosphate + NADPH + H(+)</text>
        <dbReference type="Rhea" id="RHEA:13717"/>
        <dbReference type="ChEBI" id="CHEBI:15378"/>
        <dbReference type="ChEBI" id="CHEBI:57783"/>
        <dbReference type="ChEBI" id="CHEBI:57792"/>
        <dbReference type="ChEBI" id="CHEBI:58262"/>
        <dbReference type="ChEBI" id="CHEBI:58349"/>
        <dbReference type="EC" id="1.1.1.267"/>
    </reaction>
    <physiologicalReaction direction="right-to-left" evidence="1">
        <dbReference type="Rhea" id="RHEA:13719"/>
    </physiologicalReaction>
</comment>
<comment type="cofactor">
    <cofactor evidence="1">
        <name>Mg(2+)</name>
        <dbReference type="ChEBI" id="CHEBI:18420"/>
    </cofactor>
    <cofactor evidence="1">
        <name>Mn(2+)</name>
        <dbReference type="ChEBI" id="CHEBI:29035"/>
    </cofactor>
</comment>
<comment type="pathway">
    <text evidence="1">Isoprenoid biosynthesis; isopentenyl diphosphate biosynthesis via DXP pathway; isopentenyl diphosphate from 1-deoxy-D-xylulose 5-phosphate: step 1/6.</text>
</comment>
<comment type="similarity">
    <text evidence="1">Belongs to the DXR family.</text>
</comment>
<feature type="chain" id="PRO_0000163682" description="1-deoxy-D-xylulose 5-phosphate reductoisomerase">
    <location>
        <begin position="1"/>
        <end position="394"/>
    </location>
</feature>
<feature type="binding site" evidence="1">
    <location>
        <position position="12"/>
    </location>
    <ligand>
        <name>NADPH</name>
        <dbReference type="ChEBI" id="CHEBI:57783"/>
    </ligand>
</feature>
<feature type="binding site" evidence="1">
    <location>
        <position position="13"/>
    </location>
    <ligand>
        <name>NADPH</name>
        <dbReference type="ChEBI" id="CHEBI:57783"/>
    </ligand>
</feature>
<feature type="binding site" evidence="1">
    <location>
        <position position="14"/>
    </location>
    <ligand>
        <name>NADPH</name>
        <dbReference type="ChEBI" id="CHEBI:57783"/>
    </ligand>
</feature>
<feature type="binding site" evidence="1">
    <location>
        <position position="15"/>
    </location>
    <ligand>
        <name>NADPH</name>
        <dbReference type="ChEBI" id="CHEBI:57783"/>
    </ligand>
</feature>
<feature type="binding site" evidence="1">
    <location>
        <position position="39"/>
    </location>
    <ligand>
        <name>NADPH</name>
        <dbReference type="ChEBI" id="CHEBI:57783"/>
    </ligand>
</feature>
<feature type="binding site" evidence="1">
    <location>
        <position position="40"/>
    </location>
    <ligand>
        <name>NADPH</name>
        <dbReference type="ChEBI" id="CHEBI:57783"/>
    </ligand>
</feature>
<feature type="binding site" evidence="1">
    <location>
        <position position="126"/>
    </location>
    <ligand>
        <name>NADPH</name>
        <dbReference type="ChEBI" id="CHEBI:57783"/>
    </ligand>
</feature>
<feature type="binding site" evidence="1">
    <location>
        <position position="127"/>
    </location>
    <ligand>
        <name>1-deoxy-D-xylulose 5-phosphate</name>
        <dbReference type="ChEBI" id="CHEBI:57792"/>
    </ligand>
</feature>
<feature type="binding site" evidence="1">
    <location>
        <position position="128"/>
    </location>
    <ligand>
        <name>NADPH</name>
        <dbReference type="ChEBI" id="CHEBI:57783"/>
    </ligand>
</feature>
<feature type="binding site" evidence="1">
    <location>
        <position position="152"/>
    </location>
    <ligand>
        <name>Mn(2+)</name>
        <dbReference type="ChEBI" id="CHEBI:29035"/>
    </ligand>
</feature>
<feature type="binding site" evidence="1">
    <location>
        <position position="153"/>
    </location>
    <ligand>
        <name>1-deoxy-D-xylulose 5-phosphate</name>
        <dbReference type="ChEBI" id="CHEBI:57792"/>
    </ligand>
</feature>
<feature type="binding site" evidence="1">
    <location>
        <position position="154"/>
    </location>
    <ligand>
        <name>1-deoxy-D-xylulose 5-phosphate</name>
        <dbReference type="ChEBI" id="CHEBI:57792"/>
    </ligand>
</feature>
<feature type="binding site" evidence="1">
    <location>
        <position position="154"/>
    </location>
    <ligand>
        <name>Mn(2+)</name>
        <dbReference type="ChEBI" id="CHEBI:29035"/>
    </ligand>
</feature>
<feature type="binding site" evidence="1">
    <location>
        <position position="183"/>
    </location>
    <ligand>
        <name>1-deoxy-D-xylulose 5-phosphate</name>
        <dbReference type="ChEBI" id="CHEBI:57792"/>
    </ligand>
</feature>
<feature type="binding site" evidence="1">
    <location>
        <position position="206"/>
    </location>
    <ligand>
        <name>1-deoxy-D-xylulose 5-phosphate</name>
        <dbReference type="ChEBI" id="CHEBI:57792"/>
    </ligand>
</feature>
<feature type="binding site" evidence="1">
    <location>
        <position position="212"/>
    </location>
    <ligand>
        <name>NADPH</name>
        <dbReference type="ChEBI" id="CHEBI:57783"/>
    </ligand>
</feature>
<feature type="binding site" evidence="1">
    <location>
        <position position="219"/>
    </location>
    <ligand>
        <name>1-deoxy-D-xylulose 5-phosphate</name>
        <dbReference type="ChEBI" id="CHEBI:57792"/>
    </ligand>
</feature>
<feature type="binding site" evidence="1">
    <location>
        <position position="224"/>
    </location>
    <ligand>
        <name>1-deoxy-D-xylulose 5-phosphate</name>
        <dbReference type="ChEBI" id="CHEBI:57792"/>
    </ligand>
</feature>
<feature type="binding site" evidence="1">
    <location>
        <position position="225"/>
    </location>
    <ligand>
        <name>1-deoxy-D-xylulose 5-phosphate</name>
        <dbReference type="ChEBI" id="CHEBI:57792"/>
    </ligand>
</feature>
<feature type="binding site" evidence="1">
    <location>
        <position position="228"/>
    </location>
    <ligand>
        <name>1-deoxy-D-xylulose 5-phosphate</name>
        <dbReference type="ChEBI" id="CHEBI:57792"/>
    </ligand>
</feature>
<feature type="binding site" evidence="1">
    <location>
        <position position="228"/>
    </location>
    <ligand>
        <name>Mn(2+)</name>
        <dbReference type="ChEBI" id="CHEBI:29035"/>
    </ligand>
</feature>
<reference key="1">
    <citation type="journal article" date="2000" name="Nature">
        <title>Complete DNA sequence of a serogroup A strain of Neisseria meningitidis Z2491.</title>
        <authorList>
            <person name="Parkhill J."/>
            <person name="Achtman M."/>
            <person name="James K.D."/>
            <person name="Bentley S.D."/>
            <person name="Churcher C.M."/>
            <person name="Klee S.R."/>
            <person name="Morelli G."/>
            <person name="Basham D."/>
            <person name="Brown D."/>
            <person name="Chillingworth T."/>
            <person name="Davies R.M."/>
            <person name="Davis P."/>
            <person name="Devlin K."/>
            <person name="Feltwell T."/>
            <person name="Hamlin N."/>
            <person name="Holroyd S."/>
            <person name="Jagels K."/>
            <person name="Leather S."/>
            <person name="Moule S."/>
            <person name="Mungall K.L."/>
            <person name="Quail M.A."/>
            <person name="Rajandream M.A."/>
            <person name="Rutherford K.M."/>
            <person name="Simmonds M."/>
            <person name="Skelton J."/>
            <person name="Whitehead S."/>
            <person name="Spratt B.G."/>
            <person name="Barrell B.G."/>
        </authorList>
    </citation>
    <scope>NUCLEOTIDE SEQUENCE [LARGE SCALE GENOMIC DNA]</scope>
    <source>
        <strain>DSM 15465 / Z2491</strain>
    </source>
</reference>
<organism>
    <name type="scientific">Neisseria meningitidis serogroup A / serotype 4A (strain DSM 15465 / Z2491)</name>
    <dbReference type="NCBI Taxonomy" id="122587"/>
    <lineage>
        <taxon>Bacteria</taxon>
        <taxon>Pseudomonadati</taxon>
        <taxon>Pseudomonadota</taxon>
        <taxon>Betaproteobacteria</taxon>
        <taxon>Neisseriales</taxon>
        <taxon>Neisseriaceae</taxon>
        <taxon>Neisseria</taxon>
    </lineage>
</organism>
<gene>
    <name evidence="1" type="primary">dxr</name>
    <name type="ordered locus">NMA0083</name>
</gene>
<proteinExistence type="inferred from homology"/>